<accession>B0T0S6</accession>
<feature type="chain" id="PRO_0000349028" description="Heme A synthase">
    <location>
        <begin position="1"/>
        <end position="343"/>
    </location>
</feature>
<feature type="transmembrane region" description="Helical" evidence="1">
    <location>
        <begin position="13"/>
        <end position="33"/>
    </location>
</feature>
<feature type="transmembrane region" description="Helical" evidence="1">
    <location>
        <begin position="96"/>
        <end position="116"/>
    </location>
</feature>
<feature type="transmembrane region" description="Helical" evidence="1">
    <location>
        <begin position="130"/>
        <end position="150"/>
    </location>
</feature>
<feature type="transmembrane region" description="Helical" evidence="1">
    <location>
        <begin position="165"/>
        <end position="185"/>
    </location>
</feature>
<feature type="transmembrane region" description="Helical" evidence="1">
    <location>
        <begin position="197"/>
        <end position="217"/>
    </location>
</feature>
<feature type="transmembrane region" description="Helical" evidence="1">
    <location>
        <begin position="258"/>
        <end position="278"/>
    </location>
</feature>
<feature type="transmembrane region" description="Helical" evidence="1">
    <location>
        <begin position="290"/>
        <end position="310"/>
    </location>
</feature>
<feature type="transmembrane region" description="Helical" evidence="1">
    <location>
        <begin position="311"/>
        <end position="331"/>
    </location>
</feature>
<feature type="binding site" description="axial binding residue" evidence="1">
    <location>
        <position position="260"/>
    </location>
    <ligand>
        <name>heme</name>
        <dbReference type="ChEBI" id="CHEBI:30413"/>
    </ligand>
    <ligandPart>
        <name>Fe</name>
        <dbReference type="ChEBI" id="CHEBI:18248"/>
    </ligandPart>
</feature>
<feature type="binding site" description="axial binding residue" evidence="1">
    <location>
        <position position="322"/>
    </location>
    <ligand>
        <name>heme</name>
        <dbReference type="ChEBI" id="CHEBI:30413"/>
    </ligand>
    <ligandPart>
        <name>Fe</name>
        <dbReference type="ChEBI" id="CHEBI:18248"/>
    </ligandPart>
</feature>
<name>CTAA_CAUSK</name>
<keyword id="KW-1003">Cell membrane</keyword>
<keyword id="KW-0350">Heme biosynthesis</keyword>
<keyword id="KW-0408">Iron</keyword>
<keyword id="KW-0472">Membrane</keyword>
<keyword id="KW-0479">Metal-binding</keyword>
<keyword id="KW-0560">Oxidoreductase</keyword>
<keyword id="KW-0812">Transmembrane</keyword>
<keyword id="KW-1133">Transmembrane helix</keyword>
<reference key="1">
    <citation type="submission" date="2008-01" db="EMBL/GenBank/DDBJ databases">
        <title>Complete sequence of chromosome of Caulobacter sp. K31.</title>
        <authorList>
            <consortium name="US DOE Joint Genome Institute"/>
            <person name="Copeland A."/>
            <person name="Lucas S."/>
            <person name="Lapidus A."/>
            <person name="Barry K."/>
            <person name="Glavina del Rio T."/>
            <person name="Dalin E."/>
            <person name="Tice H."/>
            <person name="Pitluck S."/>
            <person name="Bruce D."/>
            <person name="Goodwin L."/>
            <person name="Thompson L.S."/>
            <person name="Brettin T."/>
            <person name="Detter J.C."/>
            <person name="Han C."/>
            <person name="Schmutz J."/>
            <person name="Larimer F."/>
            <person name="Land M."/>
            <person name="Hauser L."/>
            <person name="Kyrpides N."/>
            <person name="Kim E."/>
            <person name="Stephens C."/>
            <person name="Richardson P."/>
        </authorList>
    </citation>
    <scope>NUCLEOTIDE SEQUENCE [LARGE SCALE GENOMIC DNA]</scope>
    <source>
        <strain>K31</strain>
    </source>
</reference>
<evidence type="ECO:0000255" key="1">
    <source>
        <dbReference type="HAMAP-Rule" id="MF_01665"/>
    </source>
</evidence>
<comment type="function">
    <text evidence="1">Catalyzes the conversion of heme O to heme A by two successive hydroxylations of the methyl group at C8. The first hydroxylation forms heme I, the second hydroxylation results in an unstable dihydroxymethyl group, which spontaneously dehydrates, resulting in the formyl group of heme A.</text>
</comment>
<comment type="catalytic activity">
    <reaction evidence="1">
        <text>Fe(II)-heme o + 2 A + H2O = Fe(II)-heme a + 2 AH2</text>
        <dbReference type="Rhea" id="RHEA:63388"/>
        <dbReference type="ChEBI" id="CHEBI:13193"/>
        <dbReference type="ChEBI" id="CHEBI:15377"/>
        <dbReference type="ChEBI" id="CHEBI:17499"/>
        <dbReference type="ChEBI" id="CHEBI:60530"/>
        <dbReference type="ChEBI" id="CHEBI:61715"/>
        <dbReference type="EC" id="1.17.99.9"/>
    </reaction>
    <physiologicalReaction direction="left-to-right" evidence="1">
        <dbReference type="Rhea" id="RHEA:63389"/>
    </physiologicalReaction>
</comment>
<comment type="cofactor">
    <cofactor evidence="1">
        <name>heme b</name>
        <dbReference type="ChEBI" id="CHEBI:60344"/>
    </cofactor>
</comment>
<comment type="pathway">
    <text evidence="1">Porphyrin-containing compound metabolism; heme A biosynthesis; heme A from heme O: step 1/1.</text>
</comment>
<comment type="subunit">
    <text evidence="1">Interacts with CtaB.</text>
</comment>
<comment type="subcellular location">
    <subcellularLocation>
        <location evidence="1">Cell membrane</location>
        <topology evidence="1">Multi-pass membrane protein</topology>
    </subcellularLocation>
</comment>
<comment type="similarity">
    <text evidence="1">Belongs to the COX15/CtaA family. Type 2 subfamily.</text>
</comment>
<organism>
    <name type="scientific">Caulobacter sp. (strain K31)</name>
    <dbReference type="NCBI Taxonomy" id="366602"/>
    <lineage>
        <taxon>Bacteria</taxon>
        <taxon>Pseudomonadati</taxon>
        <taxon>Pseudomonadota</taxon>
        <taxon>Alphaproteobacteria</taxon>
        <taxon>Caulobacterales</taxon>
        <taxon>Caulobacteraceae</taxon>
        <taxon>Caulobacter</taxon>
    </lineage>
</organism>
<dbReference type="EC" id="1.17.99.9" evidence="1"/>
<dbReference type="EMBL" id="CP000927">
    <property type="protein sequence ID" value="ABZ72155.1"/>
    <property type="molecule type" value="Genomic_DNA"/>
</dbReference>
<dbReference type="SMR" id="B0T0S6"/>
<dbReference type="STRING" id="366602.Caul_3028"/>
<dbReference type="KEGG" id="cak:Caul_3028"/>
<dbReference type="eggNOG" id="COG1612">
    <property type="taxonomic scope" value="Bacteria"/>
</dbReference>
<dbReference type="HOGENOM" id="CLU_017627_0_0_5"/>
<dbReference type="OrthoDB" id="9793156at2"/>
<dbReference type="UniPathway" id="UPA00269">
    <property type="reaction ID" value="UER00713"/>
</dbReference>
<dbReference type="GO" id="GO:0005886">
    <property type="term" value="C:plasma membrane"/>
    <property type="evidence" value="ECO:0007669"/>
    <property type="project" value="UniProtKB-SubCell"/>
</dbReference>
<dbReference type="GO" id="GO:0046872">
    <property type="term" value="F:metal ion binding"/>
    <property type="evidence" value="ECO:0007669"/>
    <property type="project" value="UniProtKB-KW"/>
</dbReference>
<dbReference type="GO" id="GO:0016653">
    <property type="term" value="F:oxidoreductase activity, acting on NAD(P)H, heme protein as acceptor"/>
    <property type="evidence" value="ECO:0007669"/>
    <property type="project" value="InterPro"/>
</dbReference>
<dbReference type="GO" id="GO:0006784">
    <property type="term" value="P:heme A biosynthetic process"/>
    <property type="evidence" value="ECO:0007669"/>
    <property type="project" value="UniProtKB-UniRule"/>
</dbReference>
<dbReference type="HAMAP" id="MF_01665">
    <property type="entry name" value="HemeA_synth_type2"/>
    <property type="match status" value="1"/>
</dbReference>
<dbReference type="InterPro" id="IPR003780">
    <property type="entry name" value="COX15/CtaA_fam"/>
</dbReference>
<dbReference type="InterPro" id="IPR023754">
    <property type="entry name" value="HemeA_Synthase_type2"/>
</dbReference>
<dbReference type="PANTHER" id="PTHR23289">
    <property type="entry name" value="CYTOCHROME C OXIDASE ASSEMBLY PROTEIN COX15"/>
    <property type="match status" value="1"/>
</dbReference>
<dbReference type="PANTHER" id="PTHR23289:SF2">
    <property type="entry name" value="CYTOCHROME C OXIDASE ASSEMBLY PROTEIN COX15 HOMOLOG"/>
    <property type="match status" value="1"/>
</dbReference>
<dbReference type="Pfam" id="PF02628">
    <property type="entry name" value="COX15-CtaA"/>
    <property type="match status" value="1"/>
</dbReference>
<proteinExistence type="inferred from homology"/>
<protein>
    <recommendedName>
        <fullName evidence="1">Heme A synthase</fullName>
        <shortName evidence="1">HAS</shortName>
        <ecNumber evidence="1">1.17.99.9</ecNumber>
    </recommendedName>
    <alternativeName>
        <fullName evidence="1">Cytochrome aa3-controlling protein</fullName>
    </alternativeName>
</protein>
<sequence length="343" mass="37691">MTSFLRSDRSRPVALWLFVVAVLVFAMVVVGGATRLTDSGLSITQWKPIMGALPPMSDEAWRANFELYKKIPQYRLVNAGMTLEAYKGIFWWEWAHRLLGRLVGVVFAIPFVFFLIRRMIPRRLIWRCAVLLGLGGLQGVVGWWMVSSGLSERVSVAPERLMTHLGLALALFVFVIWTALDAWAGSPRVEERTNWRGWALAFLGAVFFQSLLGALVAGNDAGLVYNDWPLMNGALVPAEYAGHGFWGTLAHSQGAVQLHHRLMAYALFVAAIVAGVAAARSRRLPEEAKLTAFVLVGVVCLQAGLGIWTLMTAVPLALGVLHQAGAAILLATATTFAWRVRRP</sequence>
<gene>
    <name evidence="1" type="primary">ctaA</name>
    <name type="ordered locus">Caul_3028</name>
</gene>